<proteinExistence type="inferred from homology"/>
<dbReference type="EMBL" id="CP000878">
    <property type="protein sequence ID" value="ABX08632.1"/>
    <property type="molecule type" value="Genomic_DNA"/>
</dbReference>
<dbReference type="RefSeq" id="WP_012195254.1">
    <property type="nucleotide sequence ID" value="NC_009976.1"/>
</dbReference>
<dbReference type="SMR" id="A9B9X0"/>
<dbReference type="STRING" id="93059.P9211_07011"/>
<dbReference type="KEGG" id="pmj:P9211_07011"/>
<dbReference type="eggNOG" id="COG0184">
    <property type="taxonomic scope" value="Bacteria"/>
</dbReference>
<dbReference type="HOGENOM" id="CLU_148518_0_0_3"/>
<dbReference type="OrthoDB" id="9799262at2"/>
<dbReference type="Proteomes" id="UP000000788">
    <property type="component" value="Chromosome"/>
</dbReference>
<dbReference type="GO" id="GO:0022627">
    <property type="term" value="C:cytosolic small ribosomal subunit"/>
    <property type="evidence" value="ECO:0007669"/>
    <property type="project" value="TreeGrafter"/>
</dbReference>
<dbReference type="GO" id="GO:0019843">
    <property type="term" value="F:rRNA binding"/>
    <property type="evidence" value="ECO:0007669"/>
    <property type="project" value="UniProtKB-UniRule"/>
</dbReference>
<dbReference type="GO" id="GO:0003735">
    <property type="term" value="F:structural constituent of ribosome"/>
    <property type="evidence" value="ECO:0007669"/>
    <property type="project" value="InterPro"/>
</dbReference>
<dbReference type="GO" id="GO:0006412">
    <property type="term" value="P:translation"/>
    <property type="evidence" value="ECO:0007669"/>
    <property type="project" value="UniProtKB-UniRule"/>
</dbReference>
<dbReference type="CDD" id="cd00353">
    <property type="entry name" value="Ribosomal_S15p_S13e"/>
    <property type="match status" value="1"/>
</dbReference>
<dbReference type="FunFam" id="1.10.287.10:FF:000002">
    <property type="entry name" value="30S ribosomal protein S15"/>
    <property type="match status" value="1"/>
</dbReference>
<dbReference type="Gene3D" id="6.10.250.3130">
    <property type="match status" value="1"/>
</dbReference>
<dbReference type="Gene3D" id="1.10.287.10">
    <property type="entry name" value="S15/NS1, RNA-binding"/>
    <property type="match status" value="1"/>
</dbReference>
<dbReference type="HAMAP" id="MF_01343_B">
    <property type="entry name" value="Ribosomal_uS15_B"/>
    <property type="match status" value="1"/>
</dbReference>
<dbReference type="InterPro" id="IPR000589">
    <property type="entry name" value="Ribosomal_uS15"/>
</dbReference>
<dbReference type="InterPro" id="IPR005290">
    <property type="entry name" value="Ribosomal_uS15_bac-type"/>
</dbReference>
<dbReference type="InterPro" id="IPR009068">
    <property type="entry name" value="uS15_NS1_RNA-bd_sf"/>
</dbReference>
<dbReference type="NCBIfam" id="TIGR00952">
    <property type="entry name" value="S15_bact"/>
    <property type="match status" value="1"/>
</dbReference>
<dbReference type="PANTHER" id="PTHR23321">
    <property type="entry name" value="RIBOSOMAL PROTEIN S15, BACTERIAL AND ORGANELLAR"/>
    <property type="match status" value="1"/>
</dbReference>
<dbReference type="PANTHER" id="PTHR23321:SF26">
    <property type="entry name" value="SMALL RIBOSOMAL SUBUNIT PROTEIN US15M"/>
    <property type="match status" value="1"/>
</dbReference>
<dbReference type="Pfam" id="PF00312">
    <property type="entry name" value="Ribosomal_S15"/>
    <property type="match status" value="1"/>
</dbReference>
<dbReference type="SMART" id="SM01387">
    <property type="entry name" value="Ribosomal_S15"/>
    <property type="match status" value="1"/>
</dbReference>
<dbReference type="SUPFAM" id="SSF47060">
    <property type="entry name" value="S15/NS1 RNA-binding domain"/>
    <property type="match status" value="1"/>
</dbReference>
<dbReference type="PROSITE" id="PS00362">
    <property type="entry name" value="RIBOSOMAL_S15"/>
    <property type="match status" value="1"/>
</dbReference>
<evidence type="ECO:0000255" key="1">
    <source>
        <dbReference type="HAMAP-Rule" id="MF_01343"/>
    </source>
</evidence>
<evidence type="ECO:0000256" key="2">
    <source>
        <dbReference type="SAM" id="MobiDB-lite"/>
    </source>
</evidence>
<evidence type="ECO:0000305" key="3"/>
<comment type="function">
    <text evidence="1">One of the primary rRNA binding proteins, it binds directly to 16S rRNA where it helps nucleate assembly of the platform of the 30S subunit by binding and bridging several RNA helices of the 16S rRNA.</text>
</comment>
<comment type="function">
    <text evidence="1">Forms an intersubunit bridge (bridge B4) with the 23S rRNA of the 50S subunit in the ribosome.</text>
</comment>
<comment type="subunit">
    <text evidence="1">Part of the 30S ribosomal subunit. Forms a bridge to the 50S subunit in the 70S ribosome, contacting the 23S rRNA.</text>
</comment>
<comment type="similarity">
    <text evidence="1">Belongs to the universal ribosomal protein uS15 family.</text>
</comment>
<gene>
    <name evidence="1" type="primary">rpsO</name>
    <name evidence="1" type="synonym">rps15</name>
    <name type="ordered locus">P9211_07011</name>
</gene>
<sequence>MTLNTQEKQKLINTHQNHGTDTGSAEVQVAMLSERISKLSNHLQKNIHDFSSRQGLLKMIGQRKRLLNYLRDKSNKRYTDIITKLKLRG</sequence>
<reference key="1">
    <citation type="journal article" date="2007" name="PLoS Genet.">
        <title>Patterns and implications of gene gain and loss in the evolution of Prochlorococcus.</title>
        <authorList>
            <person name="Kettler G.C."/>
            <person name="Martiny A.C."/>
            <person name="Huang K."/>
            <person name="Zucker J."/>
            <person name="Coleman M.L."/>
            <person name="Rodrigue S."/>
            <person name="Chen F."/>
            <person name="Lapidus A."/>
            <person name="Ferriera S."/>
            <person name="Johnson J."/>
            <person name="Steglich C."/>
            <person name="Church G.M."/>
            <person name="Richardson P."/>
            <person name="Chisholm S.W."/>
        </authorList>
    </citation>
    <scope>NUCLEOTIDE SEQUENCE [LARGE SCALE GENOMIC DNA]</scope>
    <source>
        <strain>MIT 9211</strain>
    </source>
</reference>
<feature type="chain" id="PRO_1000143153" description="Small ribosomal subunit protein uS15">
    <location>
        <begin position="1"/>
        <end position="89"/>
    </location>
</feature>
<feature type="region of interest" description="Disordered" evidence="2">
    <location>
        <begin position="1"/>
        <end position="23"/>
    </location>
</feature>
<organism>
    <name type="scientific">Prochlorococcus marinus (strain MIT 9211)</name>
    <dbReference type="NCBI Taxonomy" id="93059"/>
    <lineage>
        <taxon>Bacteria</taxon>
        <taxon>Bacillati</taxon>
        <taxon>Cyanobacteriota</taxon>
        <taxon>Cyanophyceae</taxon>
        <taxon>Synechococcales</taxon>
        <taxon>Prochlorococcaceae</taxon>
        <taxon>Prochlorococcus</taxon>
    </lineage>
</organism>
<keyword id="KW-1185">Reference proteome</keyword>
<keyword id="KW-0687">Ribonucleoprotein</keyword>
<keyword id="KW-0689">Ribosomal protein</keyword>
<keyword id="KW-0694">RNA-binding</keyword>
<keyword id="KW-0699">rRNA-binding</keyword>
<protein>
    <recommendedName>
        <fullName evidence="1">Small ribosomal subunit protein uS15</fullName>
    </recommendedName>
    <alternativeName>
        <fullName evidence="3">30S ribosomal protein S15</fullName>
    </alternativeName>
</protein>
<accession>A9B9X0</accession>
<name>RS15_PROM4</name>